<feature type="chain" id="PRO_1000140759" description="Small ribosomal subunit protein uS4">
    <location>
        <begin position="1"/>
        <end position="205"/>
    </location>
</feature>
<feature type="domain" description="S4 RNA-binding" evidence="1">
    <location>
        <begin position="94"/>
        <end position="155"/>
    </location>
</feature>
<feature type="region of interest" description="Disordered" evidence="2">
    <location>
        <begin position="1"/>
        <end position="49"/>
    </location>
</feature>
<feature type="compositionally biased region" description="Basic residues" evidence="2">
    <location>
        <begin position="1"/>
        <end position="12"/>
    </location>
</feature>
<accession>B1M7L0</accession>
<name>RS4_METRJ</name>
<proteinExistence type="inferred from homology"/>
<sequence>MSKRIQAKHKLDRRMGQNIWGRPKSPVNRREYGPGQHGQRRKGKMSDFGTQLRAKQKLKGYYGNITEKQFRRYYAEAIRLRGDSGENLVGLLERRLDAVVYRAKFVATPFAARQFVNHGHVKVNGVRVNIPSYQVKAGDLIEVKESSRQLEIVIVATQLSERDVPDYIEADHAKMTARVTRIPSLSEVPYPVQMEPNLVIEFYSR</sequence>
<dbReference type="EMBL" id="CP001001">
    <property type="protein sequence ID" value="ACB23735.1"/>
    <property type="molecule type" value="Genomic_DNA"/>
</dbReference>
<dbReference type="RefSeq" id="WP_010686187.1">
    <property type="nucleotide sequence ID" value="NC_010505.1"/>
</dbReference>
<dbReference type="SMR" id="B1M7L0"/>
<dbReference type="STRING" id="426355.Mrad2831_1740"/>
<dbReference type="GeneID" id="96604455"/>
<dbReference type="KEGG" id="mrd:Mrad2831_1740"/>
<dbReference type="eggNOG" id="COG0522">
    <property type="taxonomic scope" value="Bacteria"/>
</dbReference>
<dbReference type="HOGENOM" id="CLU_092403_0_0_5"/>
<dbReference type="OrthoDB" id="9803672at2"/>
<dbReference type="Proteomes" id="UP000006589">
    <property type="component" value="Chromosome"/>
</dbReference>
<dbReference type="GO" id="GO:0015935">
    <property type="term" value="C:small ribosomal subunit"/>
    <property type="evidence" value="ECO:0007669"/>
    <property type="project" value="InterPro"/>
</dbReference>
<dbReference type="GO" id="GO:0019843">
    <property type="term" value="F:rRNA binding"/>
    <property type="evidence" value="ECO:0007669"/>
    <property type="project" value="UniProtKB-UniRule"/>
</dbReference>
<dbReference type="GO" id="GO:0003735">
    <property type="term" value="F:structural constituent of ribosome"/>
    <property type="evidence" value="ECO:0007669"/>
    <property type="project" value="InterPro"/>
</dbReference>
<dbReference type="GO" id="GO:0042274">
    <property type="term" value="P:ribosomal small subunit biogenesis"/>
    <property type="evidence" value="ECO:0007669"/>
    <property type="project" value="TreeGrafter"/>
</dbReference>
<dbReference type="GO" id="GO:0006412">
    <property type="term" value="P:translation"/>
    <property type="evidence" value="ECO:0007669"/>
    <property type="project" value="UniProtKB-UniRule"/>
</dbReference>
<dbReference type="CDD" id="cd00165">
    <property type="entry name" value="S4"/>
    <property type="match status" value="1"/>
</dbReference>
<dbReference type="FunFam" id="3.10.290.10:FF:000001">
    <property type="entry name" value="30S ribosomal protein S4"/>
    <property type="match status" value="1"/>
</dbReference>
<dbReference type="Gene3D" id="1.10.1050.10">
    <property type="entry name" value="Ribosomal Protein S4 Delta 41, Chain A, domain 1"/>
    <property type="match status" value="1"/>
</dbReference>
<dbReference type="Gene3D" id="3.10.290.10">
    <property type="entry name" value="RNA-binding S4 domain"/>
    <property type="match status" value="1"/>
</dbReference>
<dbReference type="HAMAP" id="MF_01306_B">
    <property type="entry name" value="Ribosomal_uS4_B"/>
    <property type="match status" value="1"/>
</dbReference>
<dbReference type="InterPro" id="IPR022801">
    <property type="entry name" value="Ribosomal_uS4"/>
</dbReference>
<dbReference type="InterPro" id="IPR005709">
    <property type="entry name" value="Ribosomal_uS4_bac-type"/>
</dbReference>
<dbReference type="InterPro" id="IPR018079">
    <property type="entry name" value="Ribosomal_uS4_CS"/>
</dbReference>
<dbReference type="InterPro" id="IPR001912">
    <property type="entry name" value="Ribosomal_uS4_N"/>
</dbReference>
<dbReference type="InterPro" id="IPR002942">
    <property type="entry name" value="S4_RNA-bd"/>
</dbReference>
<dbReference type="InterPro" id="IPR036986">
    <property type="entry name" value="S4_RNA-bd_sf"/>
</dbReference>
<dbReference type="NCBIfam" id="NF003717">
    <property type="entry name" value="PRK05327.1"/>
    <property type="match status" value="1"/>
</dbReference>
<dbReference type="NCBIfam" id="TIGR01017">
    <property type="entry name" value="rpsD_bact"/>
    <property type="match status" value="1"/>
</dbReference>
<dbReference type="PANTHER" id="PTHR11831">
    <property type="entry name" value="30S 40S RIBOSOMAL PROTEIN"/>
    <property type="match status" value="1"/>
</dbReference>
<dbReference type="PANTHER" id="PTHR11831:SF4">
    <property type="entry name" value="SMALL RIBOSOMAL SUBUNIT PROTEIN US4M"/>
    <property type="match status" value="1"/>
</dbReference>
<dbReference type="Pfam" id="PF00163">
    <property type="entry name" value="Ribosomal_S4"/>
    <property type="match status" value="1"/>
</dbReference>
<dbReference type="Pfam" id="PF01479">
    <property type="entry name" value="S4"/>
    <property type="match status" value="1"/>
</dbReference>
<dbReference type="SMART" id="SM01390">
    <property type="entry name" value="Ribosomal_S4"/>
    <property type="match status" value="1"/>
</dbReference>
<dbReference type="SMART" id="SM00363">
    <property type="entry name" value="S4"/>
    <property type="match status" value="1"/>
</dbReference>
<dbReference type="SUPFAM" id="SSF55174">
    <property type="entry name" value="Alpha-L RNA-binding motif"/>
    <property type="match status" value="1"/>
</dbReference>
<dbReference type="PROSITE" id="PS00632">
    <property type="entry name" value="RIBOSOMAL_S4"/>
    <property type="match status" value="1"/>
</dbReference>
<dbReference type="PROSITE" id="PS50889">
    <property type="entry name" value="S4"/>
    <property type="match status" value="1"/>
</dbReference>
<gene>
    <name evidence="1" type="primary">rpsD</name>
    <name type="ordered locus">Mrad2831_1740</name>
</gene>
<reference key="1">
    <citation type="submission" date="2008-03" db="EMBL/GenBank/DDBJ databases">
        <title>Complete sequence of chromosome of Methylobacterium radiotolerans JCM 2831.</title>
        <authorList>
            <consortium name="US DOE Joint Genome Institute"/>
            <person name="Copeland A."/>
            <person name="Lucas S."/>
            <person name="Lapidus A."/>
            <person name="Glavina del Rio T."/>
            <person name="Dalin E."/>
            <person name="Tice H."/>
            <person name="Bruce D."/>
            <person name="Goodwin L."/>
            <person name="Pitluck S."/>
            <person name="Kiss H."/>
            <person name="Brettin T."/>
            <person name="Detter J.C."/>
            <person name="Han C."/>
            <person name="Kuske C.R."/>
            <person name="Schmutz J."/>
            <person name="Larimer F."/>
            <person name="Land M."/>
            <person name="Hauser L."/>
            <person name="Kyrpides N."/>
            <person name="Mikhailova N."/>
            <person name="Marx C.J."/>
            <person name="Richardson P."/>
        </authorList>
    </citation>
    <scope>NUCLEOTIDE SEQUENCE [LARGE SCALE GENOMIC DNA]</scope>
    <source>
        <strain>ATCC 27329 / DSM 1819 / JCM 2831 / NBRC 15690 / NCIMB 10815 / 0-1</strain>
    </source>
</reference>
<protein>
    <recommendedName>
        <fullName evidence="1">Small ribosomal subunit protein uS4</fullName>
    </recommendedName>
    <alternativeName>
        <fullName evidence="3">30S ribosomal protein S4</fullName>
    </alternativeName>
</protein>
<keyword id="KW-0687">Ribonucleoprotein</keyword>
<keyword id="KW-0689">Ribosomal protein</keyword>
<keyword id="KW-0694">RNA-binding</keyword>
<keyword id="KW-0699">rRNA-binding</keyword>
<evidence type="ECO:0000255" key="1">
    <source>
        <dbReference type="HAMAP-Rule" id="MF_01306"/>
    </source>
</evidence>
<evidence type="ECO:0000256" key="2">
    <source>
        <dbReference type="SAM" id="MobiDB-lite"/>
    </source>
</evidence>
<evidence type="ECO:0000305" key="3"/>
<organism>
    <name type="scientific">Methylobacterium radiotolerans (strain ATCC 27329 / DSM 1819 / JCM 2831 / NBRC 15690 / NCIMB 10815 / 0-1)</name>
    <dbReference type="NCBI Taxonomy" id="426355"/>
    <lineage>
        <taxon>Bacteria</taxon>
        <taxon>Pseudomonadati</taxon>
        <taxon>Pseudomonadota</taxon>
        <taxon>Alphaproteobacteria</taxon>
        <taxon>Hyphomicrobiales</taxon>
        <taxon>Methylobacteriaceae</taxon>
        <taxon>Methylobacterium</taxon>
    </lineage>
</organism>
<comment type="function">
    <text evidence="1">One of the primary rRNA binding proteins, it binds directly to 16S rRNA where it nucleates assembly of the body of the 30S subunit.</text>
</comment>
<comment type="function">
    <text evidence="1">With S5 and S12 plays an important role in translational accuracy.</text>
</comment>
<comment type="subunit">
    <text evidence="1">Part of the 30S ribosomal subunit. Contacts protein S5. The interaction surface between S4 and S5 is involved in control of translational fidelity.</text>
</comment>
<comment type="similarity">
    <text evidence="1">Belongs to the universal ribosomal protein uS4 family.</text>
</comment>